<feature type="chain" id="PRO_1000195941" description="Large ribosomal subunit protein bL28">
    <location>
        <begin position="1"/>
        <end position="62"/>
    </location>
</feature>
<comment type="similarity">
    <text evidence="1">Belongs to the bacterial ribosomal protein bL28 family.</text>
</comment>
<accession>C1C5H5</accession>
<gene>
    <name evidence="1" type="primary">rpmB</name>
    <name type="ordered locus">SP70585_0511</name>
</gene>
<keyword id="KW-0687">Ribonucleoprotein</keyword>
<keyword id="KW-0689">Ribosomal protein</keyword>
<dbReference type="EMBL" id="CP000918">
    <property type="protein sequence ID" value="ACO16398.1"/>
    <property type="molecule type" value="Genomic_DNA"/>
</dbReference>
<dbReference type="RefSeq" id="WP_001140948.1">
    <property type="nucleotide sequence ID" value="NC_012468.1"/>
</dbReference>
<dbReference type="SMR" id="C1C5H5"/>
<dbReference type="GeneID" id="93921138"/>
<dbReference type="KEGG" id="snm:SP70585_0511"/>
<dbReference type="HOGENOM" id="CLU_064548_7_1_9"/>
<dbReference type="Proteomes" id="UP000002211">
    <property type="component" value="Chromosome"/>
</dbReference>
<dbReference type="GO" id="GO:1990904">
    <property type="term" value="C:ribonucleoprotein complex"/>
    <property type="evidence" value="ECO:0007669"/>
    <property type="project" value="UniProtKB-KW"/>
</dbReference>
<dbReference type="GO" id="GO:0005840">
    <property type="term" value="C:ribosome"/>
    <property type="evidence" value="ECO:0007669"/>
    <property type="project" value="UniProtKB-KW"/>
</dbReference>
<dbReference type="GO" id="GO:0003735">
    <property type="term" value="F:structural constituent of ribosome"/>
    <property type="evidence" value="ECO:0007669"/>
    <property type="project" value="InterPro"/>
</dbReference>
<dbReference type="GO" id="GO:0006412">
    <property type="term" value="P:translation"/>
    <property type="evidence" value="ECO:0007669"/>
    <property type="project" value="UniProtKB-UniRule"/>
</dbReference>
<dbReference type="Gene3D" id="2.30.170.40">
    <property type="entry name" value="Ribosomal protein L28/L24"/>
    <property type="match status" value="1"/>
</dbReference>
<dbReference type="HAMAP" id="MF_00373">
    <property type="entry name" value="Ribosomal_bL28"/>
    <property type="match status" value="1"/>
</dbReference>
<dbReference type="InterPro" id="IPR050096">
    <property type="entry name" value="Bacterial_rp_bL28"/>
</dbReference>
<dbReference type="InterPro" id="IPR026569">
    <property type="entry name" value="Ribosomal_bL28"/>
</dbReference>
<dbReference type="InterPro" id="IPR034704">
    <property type="entry name" value="Ribosomal_bL28/bL31-like_sf"/>
</dbReference>
<dbReference type="InterPro" id="IPR001383">
    <property type="entry name" value="Ribosomal_bL28_bact-type"/>
</dbReference>
<dbReference type="InterPro" id="IPR037147">
    <property type="entry name" value="Ribosomal_bL28_sf"/>
</dbReference>
<dbReference type="NCBIfam" id="TIGR00009">
    <property type="entry name" value="L28"/>
    <property type="match status" value="1"/>
</dbReference>
<dbReference type="PANTHER" id="PTHR39080">
    <property type="entry name" value="50S RIBOSOMAL PROTEIN L28"/>
    <property type="match status" value="1"/>
</dbReference>
<dbReference type="PANTHER" id="PTHR39080:SF1">
    <property type="entry name" value="LARGE RIBOSOMAL SUBUNIT PROTEIN BL28A"/>
    <property type="match status" value="1"/>
</dbReference>
<dbReference type="Pfam" id="PF00830">
    <property type="entry name" value="Ribosomal_L28"/>
    <property type="match status" value="1"/>
</dbReference>
<dbReference type="SUPFAM" id="SSF143800">
    <property type="entry name" value="L28p-like"/>
    <property type="match status" value="1"/>
</dbReference>
<organism>
    <name type="scientific">Streptococcus pneumoniae (strain 70585)</name>
    <dbReference type="NCBI Taxonomy" id="488221"/>
    <lineage>
        <taxon>Bacteria</taxon>
        <taxon>Bacillati</taxon>
        <taxon>Bacillota</taxon>
        <taxon>Bacilli</taxon>
        <taxon>Lactobacillales</taxon>
        <taxon>Streptococcaceae</taxon>
        <taxon>Streptococcus</taxon>
    </lineage>
</organism>
<sequence length="62" mass="6884">MAKVCYFTGRKTVSGNNRSHAMNQTKRAVKPNLQKVTVLIDGKPKKVWASARALKSGKVERV</sequence>
<proteinExistence type="inferred from homology"/>
<evidence type="ECO:0000255" key="1">
    <source>
        <dbReference type="HAMAP-Rule" id="MF_00373"/>
    </source>
</evidence>
<evidence type="ECO:0000305" key="2"/>
<reference key="1">
    <citation type="journal article" date="2010" name="Genome Biol.">
        <title>Structure and dynamics of the pan-genome of Streptococcus pneumoniae and closely related species.</title>
        <authorList>
            <person name="Donati C."/>
            <person name="Hiller N.L."/>
            <person name="Tettelin H."/>
            <person name="Muzzi A."/>
            <person name="Croucher N.J."/>
            <person name="Angiuoli S.V."/>
            <person name="Oggioni M."/>
            <person name="Dunning Hotopp J.C."/>
            <person name="Hu F.Z."/>
            <person name="Riley D.R."/>
            <person name="Covacci A."/>
            <person name="Mitchell T.J."/>
            <person name="Bentley S.D."/>
            <person name="Kilian M."/>
            <person name="Ehrlich G.D."/>
            <person name="Rappuoli R."/>
            <person name="Moxon E.R."/>
            <person name="Masignani V."/>
        </authorList>
    </citation>
    <scope>NUCLEOTIDE SEQUENCE [LARGE SCALE GENOMIC DNA]</scope>
    <source>
        <strain>70585</strain>
    </source>
</reference>
<name>RL28_STRP7</name>
<protein>
    <recommendedName>
        <fullName evidence="1">Large ribosomal subunit protein bL28</fullName>
    </recommendedName>
    <alternativeName>
        <fullName evidence="2">50S ribosomal protein L28</fullName>
    </alternativeName>
</protein>